<proteinExistence type="evidence at protein level"/>
<keyword id="KW-0002">3D-structure</keyword>
<keyword id="KW-0027">Amidation</keyword>
<keyword id="KW-0903">Direct protein sequencing</keyword>
<keyword id="KW-0372">Hormone</keyword>
<keyword id="KW-0597">Phosphoprotein</keyword>
<keyword id="KW-1185">Reference proteome</keyword>
<keyword id="KW-0964">Secreted</keyword>
<name>PYY_PIG</name>
<reference key="1">
    <citation type="journal article" date="1982" name="Proc. Natl. Acad. Sci. U.S.A.">
        <title>Isolation and characterization of peptide YY (PYY), a candidate gut hormone that inhibits pancreatic exocrine secretion.</title>
        <authorList>
            <person name="Tatemoto K."/>
        </authorList>
    </citation>
    <scope>PROTEIN SEQUENCE</scope>
    <scope>AMIDATION AT TYR-36</scope>
    <source>
        <tissue>Intestine</tissue>
    </source>
</reference>
<reference key="2">
    <citation type="journal article" date="2001" name="FEBS Lett.">
        <title>Ser(13)-phosphorylated PYY from porcine intestine with a potent biological activity.</title>
        <authorList>
            <person name="Chen Z.-W."/>
            <person name="Eriste E."/>
            <person name="Jonsson A.P."/>
            <person name="Norberg A."/>
            <person name="Nepomuceno D."/>
            <person name="Lovenberg T.W."/>
            <person name="Bergman T."/>
            <person name="Efendic S."/>
            <person name="Joernvall H."/>
            <person name="Sillard R."/>
        </authorList>
    </citation>
    <scope>PHOSPHORYLATION AT SER-13</scope>
    <scope>IDENTIFICATION BY MASS SPECTROMETRY</scope>
</reference>
<reference key="3">
    <citation type="journal article" date="2000" name="Biochemistry">
        <title>Solution structure of monomeric peptide YY supports the functional significance of the PP-fold.</title>
        <authorList>
            <person name="Keire D.A."/>
            <person name="Kobayashi M."/>
            <person name="Solomon T.E."/>
            <person name="Reeve J.R. Jr."/>
        </authorList>
    </citation>
    <scope>STRUCTURE BY NMR</scope>
</reference>
<reference key="4">
    <citation type="journal article" date="2004" name="J. Mol. Biol.">
        <title>Structural similarities of micelle-bound peptide YY (PYY) and neuropeptide Y (NPY) are related to their affinity profiles at the Y receptors.</title>
        <authorList>
            <person name="Lerch M."/>
            <person name="Mayrhofer M."/>
            <person name="Zerbe O."/>
        </authorList>
    </citation>
    <scope>STRUCTURE BY NMR</scope>
</reference>
<protein>
    <recommendedName>
        <fullName evidence="5">Peptide YY</fullName>
        <shortName evidence="5">PYY</shortName>
    </recommendedName>
    <alternativeName>
        <fullName>Peptide tyrosine tyrosine</fullName>
    </alternativeName>
    <component>
        <recommendedName>
            <fullName evidence="2">Peptide YY(3-36)</fullName>
        </recommendedName>
        <alternativeName>
            <fullName evidence="2">PYY-II</fullName>
        </alternativeName>
    </component>
</protein>
<gene>
    <name type="primary">PYY</name>
</gene>
<evidence type="ECO:0000250" key="1">
    <source>
        <dbReference type="UniProtKB" id="P10082"/>
    </source>
</evidence>
<evidence type="ECO:0000250" key="2">
    <source>
        <dbReference type="UniProtKB" id="Q9TR93"/>
    </source>
</evidence>
<evidence type="ECO:0000269" key="3">
    <source>
    </source>
</evidence>
<evidence type="ECO:0000269" key="4">
    <source>
    </source>
</evidence>
<evidence type="ECO:0000303" key="5">
    <source>
    </source>
</evidence>
<evidence type="ECO:0000305" key="6"/>
<evidence type="ECO:0007829" key="7">
    <source>
        <dbReference type="PDB" id="1QBF"/>
    </source>
</evidence>
<evidence type="ECO:0007829" key="8">
    <source>
        <dbReference type="PDB" id="1RUU"/>
    </source>
</evidence>
<feature type="peptide" id="PRO_0000044810" description="Peptide YY">
    <location>
        <begin position="1"/>
        <end position="36"/>
    </location>
</feature>
<feature type="peptide" id="PRO_0000430665" description="Peptide YY(3-36)" evidence="1">
    <location>
        <begin position="3"/>
        <end position="36"/>
    </location>
</feature>
<feature type="site" description="Cleavage; by FAP" evidence="1">
    <location>
        <begin position="2"/>
        <end position="3"/>
    </location>
</feature>
<feature type="modified residue" description="Phosphoserine" evidence="3">
    <location>
        <position position="13"/>
    </location>
</feature>
<feature type="modified residue" description="Tyrosine amide" evidence="4">
    <location>
        <position position="36"/>
    </location>
</feature>
<feature type="strand" evidence="8">
    <location>
        <begin position="7"/>
        <end position="9"/>
    </location>
</feature>
<feature type="strand" evidence="7">
    <location>
        <begin position="11"/>
        <end position="15"/>
    </location>
</feature>
<feature type="turn" evidence="7">
    <location>
        <begin position="16"/>
        <end position="22"/>
    </location>
</feature>
<feature type="helix" evidence="7">
    <location>
        <begin position="23"/>
        <end position="25"/>
    </location>
</feature>
<feature type="helix" evidence="7">
    <location>
        <begin position="26"/>
        <end position="30"/>
    </location>
</feature>
<feature type="strand" evidence="7">
    <location>
        <begin position="31"/>
        <end position="34"/>
    </location>
</feature>
<accession>P68005</accession>
<accession>P01305</accession>
<comment type="function">
    <text>This gut peptide inhibits exocrine pancreatic secretion, has a vasoconstrictory action and inhibitis jejunal and colonic mobility.</text>
</comment>
<comment type="subcellular location">
    <subcellularLocation>
        <location>Secreted</location>
    </subcellularLocation>
</comment>
<comment type="PTM">
    <text evidence="1">The peptide YY form is cleaved at Pro-2 by the prolyl endopeptidase FAP (seprase) activity (in vitro) to generate peptide YY(3-36).</text>
</comment>
<comment type="similarity">
    <text evidence="6">Belongs to the NPY family.</text>
</comment>
<sequence length="36" mass="4242">YPAKPEAPGEDASPEELSRYYASLRHYLNLVTRQRY</sequence>
<organism>
    <name type="scientific">Sus scrofa</name>
    <name type="common">Pig</name>
    <dbReference type="NCBI Taxonomy" id="9823"/>
    <lineage>
        <taxon>Eukaryota</taxon>
        <taxon>Metazoa</taxon>
        <taxon>Chordata</taxon>
        <taxon>Craniata</taxon>
        <taxon>Vertebrata</taxon>
        <taxon>Euteleostomi</taxon>
        <taxon>Mammalia</taxon>
        <taxon>Eutheria</taxon>
        <taxon>Laurasiatheria</taxon>
        <taxon>Artiodactyla</taxon>
        <taxon>Suina</taxon>
        <taxon>Suidae</taxon>
        <taxon>Sus</taxon>
    </lineage>
</organism>
<dbReference type="PIR" id="A01574">
    <property type="entry name" value="YYPG"/>
</dbReference>
<dbReference type="PDB" id="1QBF">
    <property type="method" value="NMR"/>
    <property type="chains" value="A=1-36"/>
</dbReference>
<dbReference type="PDB" id="1RU5">
    <property type="method" value="NMR"/>
    <property type="chains" value="A=1-36"/>
</dbReference>
<dbReference type="PDB" id="1RUU">
    <property type="method" value="NMR"/>
    <property type="chains" value="A=1-36"/>
</dbReference>
<dbReference type="PDB" id="2OON">
    <property type="method" value="NMR"/>
    <property type="chains" value="A=1-36"/>
</dbReference>
<dbReference type="PDB" id="2OOP">
    <property type="method" value="NMR"/>
    <property type="chains" value="A=1-36"/>
</dbReference>
<dbReference type="PDB" id="2RLK">
    <property type="method" value="NMR"/>
    <property type="chains" value="A=1-36"/>
</dbReference>
<dbReference type="PDBsum" id="1QBF"/>
<dbReference type="PDBsum" id="1RU5"/>
<dbReference type="PDBsum" id="1RUU"/>
<dbReference type="PDBsum" id="2OON"/>
<dbReference type="PDBsum" id="2OOP"/>
<dbReference type="PDBsum" id="2RLK"/>
<dbReference type="BMRB" id="P68005"/>
<dbReference type="SMR" id="P68005"/>
<dbReference type="STRING" id="9823.ENSSSCP00000023751"/>
<dbReference type="iPTMnet" id="P68005"/>
<dbReference type="PaxDb" id="9823-ENSSSCP00000023751"/>
<dbReference type="PeptideAtlas" id="P68005"/>
<dbReference type="eggNOG" id="ENOG502S267">
    <property type="taxonomic scope" value="Eukaryota"/>
</dbReference>
<dbReference type="HOGENOM" id="CLU_162379_1_0_1"/>
<dbReference type="InParanoid" id="P68005"/>
<dbReference type="EvolutionaryTrace" id="P68005"/>
<dbReference type="Proteomes" id="UP000008227">
    <property type="component" value="Unplaced"/>
</dbReference>
<dbReference type="Proteomes" id="UP000314985">
    <property type="component" value="Unplaced"/>
</dbReference>
<dbReference type="Proteomes" id="UP000694570">
    <property type="component" value="Unplaced"/>
</dbReference>
<dbReference type="Proteomes" id="UP000694571">
    <property type="component" value="Unplaced"/>
</dbReference>
<dbReference type="Proteomes" id="UP000694720">
    <property type="component" value="Unplaced"/>
</dbReference>
<dbReference type="Proteomes" id="UP000694722">
    <property type="component" value="Unplaced"/>
</dbReference>
<dbReference type="Proteomes" id="UP000694723">
    <property type="component" value="Unplaced"/>
</dbReference>
<dbReference type="Proteomes" id="UP000694724">
    <property type="component" value="Unplaced"/>
</dbReference>
<dbReference type="Proteomes" id="UP000694725">
    <property type="component" value="Unplaced"/>
</dbReference>
<dbReference type="Proteomes" id="UP000694726">
    <property type="component" value="Unplaced"/>
</dbReference>
<dbReference type="Proteomes" id="UP000694727">
    <property type="component" value="Unplaced"/>
</dbReference>
<dbReference type="Proteomes" id="UP000694728">
    <property type="component" value="Unplaced"/>
</dbReference>
<dbReference type="GO" id="GO:0005576">
    <property type="term" value="C:extracellular region"/>
    <property type="evidence" value="ECO:0007669"/>
    <property type="project" value="UniProtKB-SubCell"/>
</dbReference>
<dbReference type="GO" id="GO:0005179">
    <property type="term" value="F:hormone activity"/>
    <property type="evidence" value="ECO:0007669"/>
    <property type="project" value="UniProtKB-KW"/>
</dbReference>
<dbReference type="GO" id="GO:0031841">
    <property type="term" value="F:neuropeptide Y receptor binding"/>
    <property type="evidence" value="ECO:0000315"/>
    <property type="project" value="AgBase"/>
</dbReference>
<dbReference type="CDD" id="cd00126">
    <property type="entry name" value="PAH"/>
    <property type="match status" value="1"/>
</dbReference>
<dbReference type="DisProt" id="DP01838"/>
<dbReference type="Gene3D" id="6.10.250.900">
    <property type="match status" value="1"/>
</dbReference>
<dbReference type="InterPro" id="IPR001955">
    <property type="entry name" value="Pancreatic_hormone-like"/>
</dbReference>
<dbReference type="InterPro" id="IPR020392">
    <property type="entry name" value="Pancreatic_hormone-like_CS"/>
</dbReference>
<dbReference type="PANTHER" id="PTHR10533">
    <property type="entry name" value="NEUROPEPTIDE Y/PANCREATIC HORMONE/PEPTIDE YY"/>
    <property type="match status" value="1"/>
</dbReference>
<dbReference type="PANTHER" id="PTHR10533:SF14">
    <property type="entry name" value="PEPTIDE YY-RELATED"/>
    <property type="match status" value="1"/>
</dbReference>
<dbReference type="Pfam" id="PF00159">
    <property type="entry name" value="Hormone_3"/>
    <property type="match status" value="1"/>
</dbReference>
<dbReference type="PRINTS" id="PR00278">
    <property type="entry name" value="PANCHORMONE"/>
</dbReference>
<dbReference type="SMART" id="SM00309">
    <property type="entry name" value="PAH"/>
    <property type="match status" value="1"/>
</dbReference>
<dbReference type="PROSITE" id="PS00265">
    <property type="entry name" value="PANCREATIC_HORMONE_1"/>
    <property type="match status" value="1"/>
</dbReference>
<dbReference type="PROSITE" id="PS50276">
    <property type="entry name" value="PANCREATIC_HORMONE_2"/>
    <property type="match status" value="1"/>
</dbReference>